<keyword id="KW-0002">3D-structure</keyword>
<keyword id="KW-0150">Chloroplast</keyword>
<keyword id="KW-0472">Membrane</keyword>
<keyword id="KW-0602">Photosynthesis</keyword>
<keyword id="KW-0604">Photosystem II</keyword>
<keyword id="KW-0934">Plastid</keyword>
<keyword id="KW-0793">Thylakoid</keyword>
<keyword id="KW-0809">Transit peptide</keyword>
<evidence type="ECO:0000305" key="1"/>
<evidence type="ECO:0007829" key="2">
    <source>
        <dbReference type="PDB" id="6KAC"/>
    </source>
</evidence>
<sequence>MALASKVATRPAVASRRGAVVVRASGESRRAVLGGLLASAVAAVAPKAALALTPVDLFDDRSVRDRGFDLIYEARDLDLPQNVREGFTQARASLDETKKRVKESEARIDADLDVFIQKSYWTEAREQLRRQVGTLRFDLNTLASTKEKEAKKAALGLRKEFIQAVEDLDFALREKDQASAAKKLEITKAKLDSVLAAVL</sequence>
<feature type="transit peptide" description="Chloroplast">
    <location>
        <begin position="1"/>
        <end position="51"/>
    </location>
</feature>
<feature type="chain" id="PRO_0000029591" description="Oxygen-evolving enhancer protein 3, chloroplastic">
    <location>
        <begin position="52"/>
        <end position="199"/>
    </location>
</feature>
<feature type="helix" evidence="2">
    <location>
        <begin position="63"/>
        <end position="66"/>
    </location>
</feature>
<feature type="turn" evidence="2">
    <location>
        <begin position="69"/>
        <end position="75"/>
    </location>
</feature>
<feature type="helix" evidence="2">
    <location>
        <begin position="81"/>
        <end position="84"/>
    </location>
</feature>
<feature type="helix" evidence="2">
    <location>
        <begin position="87"/>
        <end position="92"/>
    </location>
</feature>
<feature type="helix" evidence="2">
    <location>
        <begin position="94"/>
        <end position="108"/>
    </location>
</feature>
<feature type="turn" evidence="2">
    <location>
        <begin position="109"/>
        <end position="111"/>
    </location>
</feature>
<feature type="helix" evidence="2">
    <location>
        <begin position="114"/>
        <end position="117"/>
    </location>
</feature>
<feature type="turn" evidence="2">
    <location>
        <begin position="122"/>
        <end position="131"/>
    </location>
</feature>
<feature type="helix" evidence="2">
    <location>
        <begin position="132"/>
        <end position="134"/>
    </location>
</feature>
<feature type="helix" evidence="2">
    <location>
        <begin position="135"/>
        <end position="141"/>
    </location>
</feature>
<feature type="turn" evidence="2">
    <location>
        <begin position="142"/>
        <end position="145"/>
    </location>
</feature>
<feature type="helix" evidence="2">
    <location>
        <begin position="148"/>
        <end position="171"/>
    </location>
</feature>
<feature type="turn" evidence="2">
    <location>
        <begin position="172"/>
        <end position="175"/>
    </location>
</feature>
<feature type="helix" evidence="2">
    <location>
        <begin position="177"/>
        <end position="195"/>
    </location>
</feature>
<name>PSBQ_CHLRE</name>
<dbReference type="EMBL" id="X13832">
    <property type="protein sequence ID" value="CAA32061.1"/>
    <property type="molecule type" value="mRNA"/>
</dbReference>
<dbReference type="PIR" id="S05509">
    <property type="entry name" value="S05509"/>
</dbReference>
<dbReference type="RefSeq" id="XP_001701331.1">
    <property type="nucleotide sequence ID" value="XM_001701279.1"/>
</dbReference>
<dbReference type="PDB" id="6KAC">
    <property type="method" value="EM"/>
    <property type="resolution" value="2.70 A"/>
    <property type="chains" value="Q/q=1-199"/>
</dbReference>
<dbReference type="PDBsum" id="6KAC"/>
<dbReference type="EMDB" id="EMD-9955"/>
<dbReference type="SMR" id="P12852"/>
<dbReference type="PaxDb" id="3055-EDO97626"/>
<dbReference type="ProMEX" id="P12852"/>
<dbReference type="EnsemblPlants" id="PNW79927">
    <property type="protein sequence ID" value="PNW79927"/>
    <property type="gene ID" value="CHLRE_08g372450v5"/>
</dbReference>
<dbReference type="Gramene" id="PNW79927">
    <property type="protein sequence ID" value="PNW79927"/>
    <property type="gene ID" value="CHLRE_08g372450v5"/>
</dbReference>
<dbReference type="eggNOG" id="ENOG502S5VE">
    <property type="taxonomic scope" value="Eukaryota"/>
</dbReference>
<dbReference type="HOGENOM" id="CLU_1373988_0_0_1"/>
<dbReference type="OMA" id="YWTEARE"/>
<dbReference type="OrthoDB" id="497707at2759"/>
<dbReference type="BioCyc" id="CHLAMY:CHLREDRAFT_153656-MONOMER"/>
<dbReference type="BioCyc" id="MetaCyc:CHLREDRAFT_153656-MONOMER"/>
<dbReference type="GO" id="GO:0009535">
    <property type="term" value="C:chloroplast thylakoid membrane"/>
    <property type="evidence" value="ECO:0007669"/>
    <property type="project" value="UniProtKB-SubCell"/>
</dbReference>
<dbReference type="GO" id="GO:0019898">
    <property type="term" value="C:extrinsic component of membrane"/>
    <property type="evidence" value="ECO:0007669"/>
    <property type="project" value="InterPro"/>
</dbReference>
<dbReference type="GO" id="GO:0009654">
    <property type="term" value="C:photosystem II oxygen evolving complex"/>
    <property type="evidence" value="ECO:0007669"/>
    <property type="project" value="InterPro"/>
</dbReference>
<dbReference type="GO" id="GO:0005509">
    <property type="term" value="F:calcium ion binding"/>
    <property type="evidence" value="ECO:0007669"/>
    <property type="project" value="InterPro"/>
</dbReference>
<dbReference type="GO" id="GO:0015979">
    <property type="term" value="P:photosynthesis"/>
    <property type="evidence" value="ECO:0007669"/>
    <property type="project" value="UniProtKB-KW"/>
</dbReference>
<dbReference type="Gene3D" id="1.20.120.290">
    <property type="entry name" value="Oxygen-evolving enhancer protein 3 (PsbQ), four-helix up-down bundle"/>
    <property type="match status" value="1"/>
</dbReference>
<dbReference type="InterPro" id="IPR023222">
    <property type="entry name" value="PsbQ-like_dom_sf"/>
</dbReference>
<dbReference type="InterPro" id="IPR008797">
    <property type="entry name" value="PSII_PsbQ"/>
</dbReference>
<dbReference type="InterPro" id="IPR054099">
    <property type="entry name" value="PSII_PsbQ_pln"/>
</dbReference>
<dbReference type="PANTHER" id="PTHR33399">
    <property type="entry name" value="OXYGEN-EVOLVING ENHANCER PROTEIN 3-1, CHLOROPLASTIC"/>
    <property type="match status" value="1"/>
</dbReference>
<dbReference type="PANTHER" id="PTHR33399:SF3">
    <property type="entry name" value="OXYGEN-EVOLVING ENHANCER PROTEIN 3-1, CHLOROPLASTIC"/>
    <property type="match status" value="1"/>
</dbReference>
<dbReference type="Pfam" id="PF05757">
    <property type="entry name" value="PsbQ"/>
    <property type="match status" value="1"/>
</dbReference>
<dbReference type="SUPFAM" id="SSF101112">
    <property type="entry name" value="Oxygen-evolving enhancer protein 3"/>
    <property type="match status" value="1"/>
</dbReference>
<reference key="1">
    <citation type="journal article" date="1989" name="Plant Mol. Biol.">
        <title>Analysis of the genes of the OEE1 and OEE3 proteins of the photosystem II complex of Chlamydomonas reinhardtii.</title>
        <authorList>
            <person name="Mayfield S.P."/>
            <person name="Schirmer-Rahire G."/>
            <person name="Frank H."/>
            <person name="Zuber H."/>
            <person name="Rochaix J.-D."/>
        </authorList>
    </citation>
    <scope>NUCLEOTIDE SEQUENCE [MRNA]</scope>
    <source>
        <strain>137c / CC-125</strain>
    </source>
</reference>
<organism>
    <name type="scientific">Chlamydomonas reinhardtii</name>
    <name type="common">Chlamydomonas smithii</name>
    <dbReference type="NCBI Taxonomy" id="3055"/>
    <lineage>
        <taxon>Eukaryota</taxon>
        <taxon>Viridiplantae</taxon>
        <taxon>Chlorophyta</taxon>
        <taxon>core chlorophytes</taxon>
        <taxon>Chlorophyceae</taxon>
        <taxon>CS clade</taxon>
        <taxon>Chlamydomonadales</taxon>
        <taxon>Chlamydomonadaceae</taxon>
        <taxon>Chlamydomonas</taxon>
    </lineage>
</organism>
<protein>
    <recommendedName>
        <fullName>Oxygen-evolving enhancer protein 3, chloroplastic</fullName>
        <shortName>OEE3</shortName>
    </recommendedName>
</protein>
<accession>P12852</accession>
<gene>
    <name type="primary">PSBQ</name>
</gene>
<comment type="subcellular location">
    <subcellularLocation>
        <location>Plastid</location>
        <location>Chloroplast thylakoid membrane</location>
    </subcellularLocation>
    <text>Associated with the photosystem II complex.</text>
</comment>
<comment type="similarity">
    <text evidence="1">Belongs to the PsbQ family.</text>
</comment>
<proteinExistence type="evidence at protein level"/>